<dbReference type="EMBL" id="CP000685">
    <property type="protein sequence ID" value="ABQ05658.1"/>
    <property type="molecule type" value="Genomic_DNA"/>
</dbReference>
<dbReference type="RefSeq" id="WP_012024697.1">
    <property type="nucleotide sequence ID" value="NC_009441.1"/>
</dbReference>
<dbReference type="SMR" id="A5FGL1"/>
<dbReference type="STRING" id="376686.Fjoh_2631"/>
<dbReference type="KEGG" id="fjo:Fjoh_2631"/>
<dbReference type="eggNOG" id="COG0443">
    <property type="taxonomic scope" value="Bacteria"/>
</dbReference>
<dbReference type="HOGENOM" id="CLU_005965_2_1_10"/>
<dbReference type="OrthoDB" id="9766019at2"/>
<dbReference type="Proteomes" id="UP000006694">
    <property type="component" value="Chromosome"/>
</dbReference>
<dbReference type="GO" id="GO:0005524">
    <property type="term" value="F:ATP binding"/>
    <property type="evidence" value="ECO:0007669"/>
    <property type="project" value="UniProtKB-UniRule"/>
</dbReference>
<dbReference type="GO" id="GO:0140662">
    <property type="term" value="F:ATP-dependent protein folding chaperone"/>
    <property type="evidence" value="ECO:0007669"/>
    <property type="project" value="InterPro"/>
</dbReference>
<dbReference type="GO" id="GO:0051082">
    <property type="term" value="F:unfolded protein binding"/>
    <property type="evidence" value="ECO:0007669"/>
    <property type="project" value="InterPro"/>
</dbReference>
<dbReference type="CDD" id="cd10234">
    <property type="entry name" value="ASKHA_NBD_HSP70_DnaK-like"/>
    <property type="match status" value="1"/>
</dbReference>
<dbReference type="FunFam" id="2.60.34.10:FF:000014">
    <property type="entry name" value="Chaperone protein DnaK HSP70"/>
    <property type="match status" value="1"/>
</dbReference>
<dbReference type="FunFam" id="3.30.420.40:FF:000020">
    <property type="entry name" value="Chaperone protein HscA homolog"/>
    <property type="match status" value="1"/>
</dbReference>
<dbReference type="FunFam" id="1.20.1270.10:FF:000001">
    <property type="entry name" value="Molecular chaperone DnaK"/>
    <property type="match status" value="1"/>
</dbReference>
<dbReference type="FunFam" id="3.30.420.40:FF:000004">
    <property type="entry name" value="Molecular chaperone DnaK"/>
    <property type="match status" value="1"/>
</dbReference>
<dbReference type="FunFam" id="3.90.640.10:FF:000003">
    <property type="entry name" value="Molecular chaperone DnaK"/>
    <property type="match status" value="1"/>
</dbReference>
<dbReference type="Gene3D" id="1.20.1270.10">
    <property type="match status" value="1"/>
</dbReference>
<dbReference type="Gene3D" id="3.30.420.40">
    <property type="match status" value="2"/>
</dbReference>
<dbReference type="Gene3D" id="3.90.640.10">
    <property type="entry name" value="Actin, Chain A, domain 4"/>
    <property type="match status" value="1"/>
</dbReference>
<dbReference type="Gene3D" id="2.60.34.10">
    <property type="entry name" value="Substrate Binding Domain Of DNAk, Chain A, domain 1"/>
    <property type="match status" value="1"/>
</dbReference>
<dbReference type="HAMAP" id="MF_00332">
    <property type="entry name" value="DnaK"/>
    <property type="match status" value="1"/>
</dbReference>
<dbReference type="InterPro" id="IPR043129">
    <property type="entry name" value="ATPase_NBD"/>
</dbReference>
<dbReference type="InterPro" id="IPR012725">
    <property type="entry name" value="Chaperone_DnaK"/>
</dbReference>
<dbReference type="InterPro" id="IPR018181">
    <property type="entry name" value="Heat_shock_70_CS"/>
</dbReference>
<dbReference type="InterPro" id="IPR029048">
    <property type="entry name" value="HSP70_C_sf"/>
</dbReference>
<dbReference type="InterPro" id="IPR029047">
    <property type="entry name" value="HSP70_peptide-bd_sf"/>
</dbReference>
<dbReference type="InterPro" id="IPR013126">
    <property type="entry name" value="Hsp_70_fam"/>
</dbReference>
<dbReference type="NCBIfam" id="NF001413">
    <property type="entry name" value="PRK00290.1"/>
    <property type="match status" value="1"/>
</dbReference>
<dbReference type="NCBIfam" id="NF003520">
    <property type="entry name" value="PRK05183.1"/>
    <property type="match status" value="1"/>
</dbReference>
<dbReference type="NCBIfam" id="TIGR02350">
    <property type="entry name" value="prok_dnaK"/>
    <property type="match status" value="1"/>
</dbReference>
<dbReference type="PANTHER" id="PTHR19375">
    <property type="entry name" value="HEAT SHOCK PROTEIN 70KDA"/>
    <property type="match status" value="1"/>
</dbReference>
<dbReference type="Pfam" id="PF00012">
    <property type="entry name" value="HSP70"/>
    <property type="match status" value="1"/>
</dbReference>
<dbReference type="PRINTS" id="PR00301">
    <property type="entry name" value="HEATSHOCK70"/>
</dbReference>
<dbReference type="SUPFAM" id="SSF53067">
    <property type="entry name" value="Actin-like ATPase domain"/>
    <property type="match status" value="2"/>
</dbReference>
<dbReference type="SUPFAM" id="SSF100920">
    <property type="entry name" value="Heat shock protein 70kD (HSP70), peptide-binding domain"/>
    <property type="match status" value="1"/>
</dbReference>
<dbReference type="PROSITE" id="PS00297">
    <property type="entry name" value="HSP70_1"/>
    <property type="match status" value="1"/>
</dbReference>
<dbReference type="PROSITE" id="PS00329">
    <property type="entry name" value="HSP70_2"/>
    <property type="match status" value="1"/>
</dbReference>
<dbReference type="PROSITE" id="PS01036">
    <property type="entry name" value="HSP70_3"/>
    <property type="match status" value="1"/>
</dbReference>
<keyword id="KW-0067">ATP-binding</keyword>
<keyword id="KW-0143">Chaperone</keyword>
<keyword id="KW-0547">Nucleotide-binding</keyword>
<keyword id="KW-0597">Phosphoprotein</keyword>
<keyword id="KW-0346">Stress response</keyword>
<feature type="chain" id="PRO_1000079226" description="Chaperone protein DnaK">
    <location>
        <begin position="1"/>
        <end position="627"/>
    </location>
</feature>
<feature type="region of interest" description="Disordered" evidence="2">
    <location>
        <begin position="596"/>
        <end position="627"/>
    </location>
</feature>
<feature type="compositionally biased region" description="Low complexity" evidence="2">
    <location>
        <begin position="596"/>
        <end position="615"/>
    </location>
</feature>
<feature type="compositionally biased region" description="Acidic residues" evidence="2">
    <location>
        <begin position="617"/>
        <end position="627"/>
    </location>
</feature>
<feature type="modified residue" description="Phosphothreonine; by autocatalysis" evidence="1">
    <location>
        <position position="197"/>
    </location>
</feature>
<gene>
    <name evidence="1" type="primary">dnaK</name>
    <name type="ordered locus">Fjoh_2631</name>
</gene>
<evidence type="ECO:0000255" key="1">
    <source>
        <dbReference type="HAMAP-Rule" id="MF_00332"/>
    </source>
</evidence>
<evidence type="ECO:0000256" key="2">
    <source>
        <dbReference type="SAM" id="MobiDB-lite"/>
    </source>
</evidence>
<comment type="function">
    <text evidence="1">Acts as a chaperone.</text>
</comment>
<comment type="induction">
    <text evidence="1">By stress conditions e.g. heat shock.</text>
</comment>
<comment type="similarity">
    <text evidence="1">Belongs to the heat shock protein 70 family.</text>
</comment>
<name>DNAK_FLAJ1</name>
<organism>
    <name type="scientific">Flavobacterium johnsoniae (strain ATCC 17061 / DSM 2064 / JCM 8514 / BCRC 14874 / CCUG 350202 / NBRC 14942 / NCIMB 11054 / UW101)</name>
    <name type="common">Cytophaga johnsonae</name>
    <dbReference type="NCBI Taxonomy" id="376686"/>
    <lineage>
        <taxon>Bacteria</taxon>
        <taxon>Pseudomonadati</taxon>
        <taxon>Bacteroidota</taxon>
        <taxon>Flavobacteriia</taxon>
        <taxon>Flavobacteriales</taxon>
        <taxon>Flavobacteriaceae</taxon>
        <taxon>Flavobacterium</taxon>
    </lineage>
</organism>
<accession>A5FGL1</accession>
<reference key="1">
    <citation type="journal article" date="2009" name="Appl. Environ. Microbiol.">
        <title>Novel features of the polysaccharide-digesting gliding bacterium Flavobacterium johnsoniae as revealed by genome sequence analysis.</title>
        <authorList>
            <person name="McBride M.J."/>
            <person name="Xie G."/>
            <person name="Martens E.C."/>
            <person name="Lapidus A."/>
            <person name="Henrissat B."/>
            <person name="Rhodes R.G."/>
            <person name="Goltsman E."/>
            <person name="Wang W."/>
            <person name="Xu J."/>
            <person name="Hunnicutt D.W."/>
            <person name="Staroscik A.M."/>
            <person name="Hoover T.R."/>
            <person name="Cheng Y.Q."/>
            <person name="Stein J.L."/>
        </authorList>
    </citation>
    <scope>NUCLEOTIDE SEQUENCE [LARGE SCALE GENOMIC DNA]</scope>
    <source>
        <strain>ATCC 17061 / DSM 2064 / JCM 8514 / BCRC 14874 / CCUG 350202 / NBRC 14942 / NCIMB 11054 / UW101</strain>
    </source>
</reference>
<sequence>MGKIIGIDLGTTNSCVSVMEGNEAVVIPNAEGKRTTPSIIAFVEGGEIKVGDPAKRQAVTNPTKTIASIKRFMGHTFAETQDEAKRVPYSVVKGDNNTPRVDIDGRLYTAQELSAMTLQKMKKTAEDYLGQTVTEAVITVPAYFNDAQRQATKEAGEIAGLKVMRIINEPTAAALAYGLDKKGNDQKIAVYDLGGGTFDISVLELGDGVFEVLSTNGDTHLGGDDFDQVIIDWLADEFKTEEGIDLRLDPMSLQRLKEAAEKAKIELSSSAETEINLPYVTATASGPKHLVKKLSRAKFEQLSDTLVKRSMEPVAKALKDAGLSTSDIDEVILVGGSTRMPRIADEVEKFFGKKASKGVNPDEVVAIGAAIQGGVLSGDVKDVLLLDVTPLSLGIETMGGVLTKLIESNTTIPTKKSQVFSTAADSQPSVEIHVLQGERAMAADNKTIGRFHLDGIPPAPRGVPQIEVTFDIDANGIIKVSATDKGTGKSHDIRIEASSGLTAEEIEKMKKDAEANADADRIAKERAEKLNEADSTIFQTESQLKELGDKLTDDQKTAIEYALTELRMAHQSQDLDAIQKGLDNVNAAWKTATEAMYAQGGDQGQQAAPQQEQSGDNVEDVEFEEVK</sequence>
<protein>
    <recommendedName>
        <fullName evidence="1">Chaperone protein DnaK</fullName>
    </recommendedName>
    <alternativeName>
        <fullName evidence="1">HSP70</fullName>
    </alternativeName>
    <alternativeName>
        <fullName evidence="1">Heat shock 70 kDa protein</fullName>
    </alternativeName>
    <alternativeName>
        <fullName evidence="1">Heat shock protein 70</fullName>
    </alternativeName>
</protein>
<proteinExistence type="inferred from homology"/>